<feature type="chain" id="PRO_0000133460" description="Protein E7">
    <location>
        <begin position="1"/>
        <end position="110"/>
    </location>
</feature>
<feature type="zinc finger region" evidence="1">
    <location>
        <begin position="69"/>
        <end position="105"/>
    </location>
</feature>
<feature type="region of interest" description="E7 terminal domain" evidence="1">
    <location>
        <begin position="1"/>
        <end position="47"/>
    </location>
</feature>
<feature type="short sequence motif" description="LXCXE motif; interaction with host RB1 and TMEM173/STING" evidence="1">
    <location>
        <begin position="26"/>
        <end position="30"/>
    </location>
</feature>
<feature type="short sequence motif" description="Nuclear export signal" evidence="1">
    <location>
        <begin position="87"/>
        <end position="95"/>
    </location>
</feature>
<protein>
    <recommendedName>
        <fullName evidence="1">Protein E7</fullName>
    </recommendedName>
</protein>
<name>VE7_HPV68</name>
<reference key="1">
    <citation type="journal article" date="1996" name="J. Clin. Microbiol.">
        <title>Two novel genital human papillomavirus (HPV) types, HPV68 and HPV70, related to the potentially oncogenic HPV39.</title>
        <authorList>
            <person name="Longuet M."/>
            <person name="Beaudenon S."/>
            <person name="Orth G."/>
        </authorList>
    </citation>
    <scope>NUCLEOTIDE SEQUENCE [GENOMIC DNA]</scope>
</reference>
<reference key="2">
    <citation type="journal article" date="2002" name="Rev. Med. Virol.">
        <title>Interactions of SV40 large T antigen and other viral proteins with retinoblastoma tumour suppressor.</title>
        <authorList>
            <person name="Lee C."/>
            <person name="Cho Y."/>
        </authorList>
    </citation>
    <scope>REVIEW</scope>
</reference>
<keyword id="KW-0010">Activator</keyword>
<keyword id="KW-0238">DNA-binding</keyword>
<keyword id="KW-0244">Early protein</keyword>
<keyword id="KW-1078">G1/S host cell cycle checkpoint dysregulation by virus</keyword>
<keyword id="KW-1035">Host cytoplasm</keyword>
<keyword id="KW-1048">Host nucleus</keyword>
<keyword id="KW-0945">Host-virus interaction</keyword>
<keyword id="KW-1090">Inhibition of host innate immune response by virus</keyword>
<keyword id="KW-1114">Inhibition of host interferon signaling pathway by virus</keyword>
<keyword id="KW-0922">Interferon antiviral system evasion</keyword>
<keyword id="KW-0479">Metal-binding</keyword>
<keyword id="KW-1121">Modulation of host cell cycle by virus</keyword>
<keyword id="KW-0553">Oncogene</keyword>
<keyword id="KW-0804">Transcription</keyword>
<keyword id="KW-0805">Transcription regulation</keyword>
<keyword id="KW-0899">Viral immunoevasion</keyword>
<keyword id="KW-0862">Zinc</keyword>
<keyword id="KW-0863">Zinc-finger</keyword>
<sequence length="110" mass="12756">MHGPKPTVQEIVLELCPYNEIQPVDLVCHEQLGDSDDEIDEPDHAVNHHQHLLLARRDEQQRHRIQCLCCKCNKALQLVVEASRDNLRTLQQLFMDSLNFVCPWCATETQ</sequence>
<evidence type="ECO:0000255" key="1">
    <source>
        <dbReference type="HAMAP-Rule" id="MF_04004"/>
    </source>
</evidence>
<comment type="function">
    <text evidence="1">Plays a role in viral genome replication by driving entry of quiescent cells into the cell cycle. Stimulation of progression from G1 to S phase allows the virus to efficiently use the cellular DNA replicating machinery to achieve viral genome replication. E7 protein has both transforming and trans-activating activities. Induces the disassembly of the E2F1 transcription factor from RB1, with subsequent transcriptional activation of E2F1-regulated S-phase genes. Interferes with host histone deacetylation mediated by HDAC1 and HDAC2, leading to transcription activation. Also plays a role in the inhibition of both antiviral and antiproliferative functions of host interferon alpha. Interaction with host TMEM173/STING impairs the ability of TMEM173/STING to sense cytosolic DNA and promote the production of type I interferon (IFN-alpha and IFN-beta).</text>
</comment>
<comment type="subunit">
    <text evidence="1">Homodimer. Homooligomer. Interacts with host RB1; this interaction induces dissociation of RB1-E2F1 complex thereby disrupting RB1 activity. Interacts with host EP300; this interaction represses EP300 transcriptional activity. Interacts with protein E2; this interaction inhibits E7 oncogenic activity. Interacts with host TMEM173/STING; this interaction impairs the ability of TMEM173/STING to sense cytosolic DNA and promote the production of type I interferon (IFN-alpha and IFN-beta).</text>
</comment>
<comment type="subcellular location">
    <subcellularLocation>
        <location evidence="1">Host cytoplasm</location>
    </subcellularLocation>
    <subcellularLocation>
        <location evidence="1">Host nucleus</location>
    </subcellularLocation>
    <text evidence="1">Predominantly found in the host nucleus.</text>
</comment>
<comment type="domain">
    <text evidence="1">The E7 terminal domain is an intrinsically disordered domain, whose flexibility and conformational transitions confer target adaptability to the oncoprotein. It allows adaptation to a variety of protein targets and exposes the PEST degradation sequence that regulates its turnover in the cell.</text>
</comment>
<comment type="PTM">
    <text evidence="1">Highly phosphorylated.</text>
</comment>
<comment type="similarity">
    <text evidence="1">Belongs to the papillomaviridae E7 protein family.</text>
</comment>
<organism>
    <name type="scientific">Human papillomavirus 68</name>
    <dbReference type="NCBI Taxonomy" id="45240"/>
    <lineage>
        <taxon>Viruses</taxon>
        <taxon>Monodnaviria</taxon>
        <taxon>Shotokuvirae</taxon>
        <taxon>Cossaviricota</taxon>
        <taxon>Papovaviricetes</taxon>
        <taxon>Zurhausenvirales</taxon>
        <taxon>Papillomaviridae</taxon>
        <taxon>Firstpapillomavirinae</taxon>
        <taxon>Alphapapillomavirus</taxon>
        <taxon>Alphapapillomavirus 7</taxon>
    </lineage>
</organism>
<dbReference type="EMBL" id="X67160">
    <property type="protein sequence ID" value="CAA47633.1"/>
    <property type="molecule type" value="Genomic_DNA"/>
</dbReference>
<dbReference type="SMR" id="P54668"/>
<dbReference type="GO" id="GO:0030430">
    <property type="term" value="C:host cell cytoplasm"/>
    <property type="evidence" value="ECO:0007669"/>
    <property type="project" value="UniProtKB-SubCell"/>
</dbReference>
<dbReference type="GO" id="GO:0042025">
    <property type="term" value="C:host cell nucleus"/>
    <property type="evidence" value="ECO:0007669"/>
    <property type="project" value="UniProtKB-SubCell"/>
</dbReference>
<dbReference type="GO" id="GO:0003677">
    <property type="term" value="F:DNA binding"/>
    <property type="evidence" value="ECO:0007669"/>
    <property type="project" value="UniProtKB-UniRule"/>
</dbReference>
<dbReference type="GO" id="GO:0003700">
    <property type="term" value="F:DNA-binding transcription factor activity"/>
    <property type="evidence" value="ECO:0007669"/>
    <property type="project" value="UniProtKB-UniRule"/>
</dbReference>
<dbReference type="GO" id="GO:0019904">
    <property type="term" value="F:protein domain specific binding"/>
    <property type="evidence" value="ECO:0007669"/>
    <property type="project" value="UniProtKB-UniRule"/>
</dbReference>
<dbReference type="GO" id="GO:0008270">
    <property type="term" value="F:zinc ion binding"/>
    <property type="evidence" value="ECO:0007669"/>
    <property type="project" value="UniProtKB-KW"/>
</dbReference>
<dbReference type="GO" id="GO:0006351">
    <property type="term" value="P:DNA-templated transcription"/>
    <property type="evidence" value="ECO:0007669"/>
    <property type="project" value="UniProtKB-UniRule"/>
</dbReference>
<dbReference type="GO" id="GO:0039645">
    <property type="term" value="P:symbiont-mediated perturbation of host cell cycle G1/S transition checkpoint"/>
    <property type="evidence" value="ECO:0007669"/>
    <property type="project" value="UniProtKB-UniRule"/>
</dbReference>
<dbReference type="GO" id="GO:0052170">
    <property type="term" value="P:symbiont-mediated suppression of host innate immune response"/>
    <property type="evidence" value="ECO:0007669"/>
    <property type="project" value="UniProtKB-KW"/>
</dbReference>
<dbReference type="GO" id="GO:0039502">
    <property type="term" value="P:symbiont-mediated suppression of host type I interferon-mediated signaling pathway"/>
    <property type="evidence" value="ECO:0007669"/>
    <property type="project" value="UniProtKB-UniRule"/>
</dbReference>
<dbReference type="Gene3D" id="3.30.160.330">
    <property type="match status" value="1"/>
</dbReference>
<dbReference type="HAMAP" id="MF_04004">
    <property type="entry name" value="PPV_E7"/>
    <property type="match status" value="1"/>
</dbReference>
<dbReference type="InterPro" id="IPR000148">
    <property type="entry name" value="Papilloma_E7"/>
</dbReference>
<dbReference type="Pfam" id="PF00527">
    <property type="entry name" value="E7"/>
    <property type="match status" value="1"/>
</dbReference>
<dbReference type="PIRSF" id="PIRSF003407">
    <property type="entry name" value="Papvi_E7"/>
    <property type="match status" value="1"/>
</dbReference>
<dbReference type="SUPFAM" id="SSF161234">
    <property type="entry name" value="E7 C-terminal domain-like"/>
    <property type="match status" value="1"/>
</dbReference>
<organismHost>
    <name type="scientific">Homo sapiens</name>
    <name type="common">Human</name>
    <dbReference type="NCBI Taxonomy" id="9606"/>
</organismHost>
<accession>P54668</accession>
<proteinExistence type="inferred from homology"/>
<gene>
    <name evidence="1" type="primary">E7</name>
</gene>